<proteinExistence type="inferred from homology"/>
<accession>A9B076</accession>
<comment type="function">
    <text evidence="1">This is one of the proteins that binds to the 5S RNA in the ribosome where it forms part of the central protuberance.</text>
</comment>
<comment type="subunit">
    <text evidence="1">Part of the 50S ribosomal subunit; part of the 5S rRNA/L5/L18/L25 subcomplex. Contacts the 5S rRNA. Binds to the 5S rRNA independently of L5 and L18.</text>
</comment>
<comment type="similarity">
    <text evidence="1">Belongs to the bacterial ribosomal protein bL25 family. CTC subfamily.</text>
</comment>
<dbReference type="EMBL" id="CP000875">
    <property type="protein sequence ID" value="ABX05185.1"/>
    <property type="molecule type" value="Genomic_DNA"/>
</dbReference>
<dbReference type="SMR" id="A9B076"/>
<dbReference type="FunCoup" id="A9B076">
    <property type="interactions" value="335"/>
</dbReference>
<dbReference type="STRING" id="316274.Haur_2547"/>
<dbReference type="KEGG" id="hau:Haur_2547"/>
<dbReference type="eggNOG" id="COG1825">
    <property type="taxonomic scope" value="Bacteria"/>
</dbReference>
<dbReference type="HOGENOM" id="CLU_075939_2_2_0"/>
<dbReference type="InParanoid" id="A9B076"/>
<dbReference type="Proteomes" id="UP000000787">
    <property type="component" value="Chromosome"/>
</dbReference>
<dbReference type="GO" id="GO:0022625">
    <property type="term" value="C:cytosolic large ribosomal subunit"/>
    <property type="evidence" value="ECO:0007669"/>
    <property type="project" value="TreeGrafter"/>
</dbReference>
<dbReference type="GO" id="GO:0008097">
    <property type="term" value="F:5S rRNA binding"/>
    <property type="evidence" value="ECO:0007669"/>
    <property type="project" value="InterPro"/>
</dbReference>
<dbReference type="GO" id="GO:0003735">
    <property type="term" value="F:structural constituent of ribosome"/>
    <property type="evidence" value="ECO:0007669"/>
    <property type="project" value="InterPro"/>
</dbReference>
<dbReference type="GO" id="GO:0006412">
    <property type="term" value="P:translation"/>
    <property type="evidence" value="ECO:0007669"/>
    <property type="project" value="UniProtKB-UniRule"/>
</dbReference>
<dbReference type="CDD" id="cd00495">
    <property type="entry name" value="Ribosomal_L25_TL5_CTC"/>
    <property type="match status" value="1"/>
</dbReference>
<dbReference type="Gene3D" id="2.170.120.20">
    <property type="entry name" value="Ribosomal protein L25, beta domain"/>
    <property type="match status" value="1"/>
</dbReference>
<dbReference type="Gene3D" id="2.40.240.10">
    <property type="entry name" value="Ribosomal Protein L25, Chain P"/>
    <property type="match status" value="1"/>
</dbReference>
<dbReference type="HAMAP" id="MF_01334">
    <property type="entry name" value="Ribosomal_bL25_CTC"/>
    <property type="match status" value="1"/>
</dbReference>
<dbReference type="InterPro" id="IPR020056">
    <property type="entry name" value="Rbsml_bL25/Gln-tRNA_synth_N"/>
</dbReference>
<dbReference type="InterPro" id="IPR011035">
    <property type="entry name" value="Ribosomal_bL25/Gln-tRNA_synth"/>
</dbReference>
<dbReference type="InterPro" id="IPR020057">
    <property type="entry name" value="Ribosomal_bL25_b-dom"/>
</dbReference>
<dbReference type="InterPro" id="IPR037121">
    <property type="entry name" value="Ribosomal_bL25_C"/>
</dbReference>
<dbReference type="InterPro" id="IPR001021">
    <property type="entry name" value="Ribosomal_bL25_long"/>
</dbReference>
<dbReference type="InterPro" id="IPR029751">
    <property type="entry name" value="Ribosomal_L25_dom"/>
</dbReference>
<dbReference type="InterPro" id="IPR020930">
    <property type="entry name" value="Ribosomal_uL5_bac-type"/>
</dbReference>
<dbReference type="NCBIfam" id="TIGR00731">
    <property type="entry name" value="bL25_bact_ctc"/>
    <property type="match status" value="1"/>
</dbReference>
<dbReference type="PANTHER" id="PTHR33284">
    <property type="entry name" value="RIBOSOMAL PROTEIN L25/GLN-TRNA SYNTHETASE, ANTI-CODON-BINDING DOMAIN-CONTAINING PROTEIN"/>
    <property type="match status" value="1"/>
</dbReference>
<dbReference type="PANTHER" id="PTHR33284:SF1">
    <property type="entry name" value="RIBOSOMAL PROTEIN L25_GLN-TRNA SYNTHETASE, ANTI-CODON-BINDING DOMAIN-CONTAINING PROTEIN"/>
    <property type="match status" value="1"/>
</dbReference>
<dbReference type="Pfam" id="PF01386">
    <property type="entry name" value="Ribosomal_L25p"/>
    <property type="match status" value="1"/>
</dbReference>
<dbReference type="Pfam" id="PF14693">
    <property type="entry name" value="Ribosomal_TL5_C"/>
    <property type="match status" value="1"/>
</dbReference>
<dbReference type="SUPFAM" id="SSF50715">
    <property type="entry name" value="Ribosomal protein L25-like"/>
    <property type="match status" value="1"/>
</dbReference>
<protein>
    <recommendedName>
        <fullName evidence="1">Large ribosomal subunit protein bL25</fullName>
    </recommendedName>
    <alternativeName>
        <fullName evidence="2">50S ribosomal protein L25</fullName>
    </alternativeName>
    <alternativeName>
        <fullName evidence="1">General stress protein CTC</fullName>
    </alternativeName>
</protein>
<name>RL25_HERA2</name>
<evidence type="ECO:0000255" key="1">
    <source>
        <dbReference type="HAMAP-Rule" id="MF_01334"/>
    </source>
</evidence>
<evidence type="ECO:0000305" key="2"/>
<keyword id="KW-0687">Ribonucleoprotein</keyword>
<keyword id="KW-0689">Ribosomal protein</keyword>
<keyword id="KW-0694">RNA-binding</keyword>
<keyword id="KW-0699">rRNA-binding</keyword>
<gene>
    <name evidence="1" type="primary">rplY</name>
    <name evidence="1" type="synonym">ctc</name>
    <name type="ordered locus">Haur_2547</name>
</gene>
<reference key="1">
    <citation type="journal article" date="2011" name="Stand. Genomic Sci.">
        <title>Complete genome sequence of the filamentous gliding predatory bacterium Herpetosiphon aurantiacus type strain (114-95(T)).</title>
        <authorList>
            <person name="Kiss H."/>
            <person name="Nett M."/>
            <person name="Domin N."/>
            <person name="Martin K."/>
            <person name="Maresca J.A."/>
            <person name="Copeland A."/>
            <person name="Lapidus A."/>
            <person name="Lucas S."/>
            <person name="Berry K.W."/>
            <person name="Glavina Del Rio T."/>
            <person name="Dalin E."/>
            <person name="Tice H."/>
            <person name="Pitluck S."/>
            <person name="Richardson P."/>
            <person name="Bruce D."/>
            <person name="Goodwin L."/>
            <person name="Han C."/>
            <person name="Detter J.C."/>
            <person name="Schmutz J."/>
            <person name="Brettin T."/>
            <person name="Land M."/>
            <person name="Hauser L."/>
            <person name="Kyrpides N.C."/>
            <person name="Ivanova N."/>
            <person name="Goeker M."/>
            <person name="Woyke T."/>
            <person name="Klenk H.P."/>
            <person name="Bryant D.A."/>
        </authorList>
    </citation>
    <scope>NUCLEOTIDE SEQUENCE [LARGE SCALE GENOMIC DNA]</scope>
    <source>
        <strain>ATCC 23779 / DSM 785 / 114-95</strain>
    </source>
</reference>
<organism>
    <name type="scientific">Herpetosiphon aurantiacus (strain ATCC 23779 / DSM 785 / 114-95)</name>
    <dbReference type="NCBI Taxonomy" id="316274"/>
    <lineage>
        <taxon>Bacteria</taxon>
        <taxon>Bacillati</taxon>
        <taxon>Chloroflexota</taxon>
        <taxon>Chloroflexia</taxon>
        <taxon>Herpetosiphonales</taxon>
        <taxon>Herpetosiphonaceae</taxon>
        <taxon>Herpetosiphon</taxon>
    </lineage>
</organism>
<feature type="chain" id="PRO_1000214653" description="Large ribosomal subunit protein bL25">
    <location>
        <begin position="1"/>
        <end position="199"/>
    </location>
</feature>
<sequence length="199" mass="21628">MANETLRLALQPREITGKKVQSLRDQGILPIGICGRGIEPYSAQVDEREFNKVINQAGYSGLIELSIPGQKRQVAFLLEVQRNSVTNRIIHADLRVVDANAPVELDIHVALQGENDMVSRGNAVLNLVQSVIRVRALPGDVPHQIDIDASSLTEIGQQILVKDLSLPATVEILDDVETLILTLGYPQAEEAPAAETAAE</sequence>